<proteinExistence type="inferred from homology"/>
<accession>Q5HPT3</accession>
<feature type="chain" id="PRO_0000143888" description="Uridylate kinase">
    <location>
        <begin position="1"/>
        <end position="240"/>
    </location>
</feature>
<feature type="region of interest" description="Involved in allosteric activation by GTP" evidence="1">
    <location>
        <begin position="21"/>
        <end position="26"/>
    </location>
</feature>
<feature type="binding site" evidence="1">
    <location>
        <begin position="13"/>
        <end position="16"/>
    </location>
    <ligand>
        <name>ATP</name>
        <dbReference type="ChEBI" id="CHEBI:30616"/>
    </ligand>
</feature>
<feature type="binding site" evidence="1">
    <location>
        <position position="55"/>
    </location>
    <ligand>
        <name>UMP</name>
        <dbReference type="ChEBI" id="CHEBI:57865"/>
    </ligand>
</feature>
<feature type="binding site" evidence="1">
    <location>
        <position position="56"/>
    </location>
    <ligand>
        <name>ATP</name>
        <dbReference type="ChEBI" id="CHEBI:30616"/>
    </ligand>
</feature>
<feature type="binding site" evidence="1">
    <location>
        <position position="60"/>
    </location>
    <ligand>
        <name>ATP</name>
        <dbReference type="ChEBI" id="CHEBI:30616"/>
    </ligand>
</feature>
<feature type="binding site" evidence="1">
    <location>
        <position position="75"/>
    </location>
    <ligand>
        <name>UMP</name>
        <dbReference type="ChEBI" id="CHEBI:57865"/>
    </ligand>
</feature>
<feature type="binding site" evidence="1">
    <location>
        <begin position="136"/>
        <end position="143"/>
    </location>
    <ligand>
        <name>UMP</name>
        <dbReference type="ChEBI" id="CHEBI:57865"/>
    </ligand>
</feature>
<feature type="binding site" evidence="1">
    <location>
        <position position="164"/>
    </location>
    <ligand>
        <name>ATP</name>
        <dbReference type="ChEBI" id="CHEBI:30616"/>
    </ligand>
</feature>
<feature type="binding site" evidence="1">
    <location>
        <position position="170"/>
    </location>
    <ligand>
        <name>ATP</name>
        <dbReference type="ChEBI" id="CHEBI:30616"/>
    </ligand>
</feature>
<feature type="binding site" evidence="1">
    <location>
        <position position="173"/>
    </location>
    <ligand>
        <name>ATP</name>
        <dbReference type="ChEBI" id="CHEBI:30616"/>
    </ligand>
</feature>
<reference key="1">
    <citation type="journal article" date="2005" name="J. Bacteriol.">
        <title>Insights on evolution of virulence and resistance from the complete genome analysis of an early methicillin-resistant Staphylococcus aureus strain and a biofilm-producing methicillin-resistant Staphylococcus epidermidis strain.</title>
        <authorList>
            <person name="Gill S.R."/>
            <person name="Fouts D.E."/>
            <person name="Archer G.L."/>
            <person name="Mongodin E.F."/>
            <person name="DeBoy R.T."/>
            <person name="Ravel J."/>
            <person name="Paulsen I.T."/>
            <person name="Kolonay J.F."/>
            <person name="Brinkac L.M."/>
            <person name="Beanan M.J."/>
            <person name="Dodson R.J."/>
            <person name="Daugherty S.C."/>
            <person name="Madupu R."/>
            <person name="Angiuoli S.V."/>
            <person name="Durkin A.S."/>
            <person name="Haft D.H."/>
            <person name="Vamathevan J.J."/>
            <person name="Khouri H."/>
            <person name="Utterback T.R."/>
            <person name="Lee C."/>
            <person name="Dimitrov G."/>
            <person name="Jiang L."/>
            <person name="Qin H."/>
            <person name="Weidman J."/>
            <person name="Tran K."/>
            <person name="Kang K.H."/>
            <person name="Hance I.R."/>
            <person name="Nelson K.E."/>
            <person name="Fraser C.M."/>
        </authorList>
    </citation>
    <scope>NUCLEOTIDE SEQUENCE [LARGE SCALE GENOMIC DNA]</scope>
    <source>
        <strain>ATCC 35984 / DSM 28319 / BCRC 17069 / CCUG 31568 / BM 3577 / RP62A</strain>
    </source>
</reference>
<comment type="function">
    <text evidence="1">Catalyzes the reversible phosphorylation of UMP to UDP.</text>
</comment>
<comment type="catalytic activity">
    <reaction evidence="1">
        <text>UMP + ATP = UDP + ADP</text>
        <dbReference type="Rhea" id="RHEA:24400"/>
        <dbReference type="ChEBI" id="CHEBI:30616"/>
        <dbReference type="ChEBI" id="CHEBI:57865"/>
        <dbReference type="ChEBI" id="CHEBI:58223"/>
        <dbReference type="ChEBI" id="CHEBI:456216"/>
        <dbReference type="EC" id="2.7.4.22"/>
    </reaction>
</comment>
<comment type="activity regulation">
    <text evidence="1">Allosterically activated by GTP. Inhibited by UTP.</text>
</comment>
<comment type="pathway">
    <text evidence="1">Pyrimidine metabolism; CTP biosynthesis via de novo pathway; UDP from UMP (UMPK route): step 1/1.</text>
</comment>
<comment type="subunit">
    <text evidence="1">Homohexamer.</text>
</comment>
<comment type="subcellular location">
    <subcellularLocation>
        <location evidence="1">Cytoplasm</location>
    </subcellularLocation>
</comment>
<comment type="similarity">
    <text evidence="1">Belongs to the UMP kinase family.</text>
</comment>
<name>PYRH_STAEQ</name>
<protein>
    <recommendedName>
        <fullName evidence="1">Uridylate kinase</fullName>
        <shortName evidence="1">UK</shortName>
        <ecNumber evidence="1">2.7.4.22</ecNumber>
    </recommendedName>
    <alternativeName>
        <fullName evidence="1">Uridine monophosphate kinase</fullName>
        <shortName evidence="1">UMP kinase</shortName>
        <shortName evidence="1">UMPK</shortName>
    </alternativeName>
</protein>
<dbReference type="EC" id="2.7.4.22" evidence="1"/>
<dbReference type="EMBL" id="CP000029">
    <property type="protein sequence ID" value="AAW54178.1"/>
    <property type="molecule type" value="Genomic_DNA"/>
</dbReference>
<dbReference type="RefSeq" id="WP_002439511.1">
    <property type="nucleotide sequence ID" value="NC_002976.3"/>
</dbReference>
<dbReference type="SMR" id="Q5HPT3"/>
<dbReference type="STRING" id="176279.SERP0825"/>
<dbReference type="GeneID" id="50018930"/>
<dbReference type="KEGG" id="ser:SERP0825"/>
<dbReference type="eggNOG" id="COG0528">
    <property type="taxonomic scope" value="Bacteria"/>
</dbReference>
<dbReference type="HOGENOM" id="CLU_033861_0_0_9"/>
<dbReference type="UniPathway" id="UPA00159">
    <property type="reaction ID" value="UER00275"/>
</dbReference>
<dbReference type="Proteomes" id="UP000000531">
    <property type="component" value="Chromosome"/>
</dbReference>
<dbReference type="GO" id="GO:0005737">
    <property type="term" value="C:cytoplasm"/>
    <property type="evidence" value="ECO:0007669"/>
    <property type="project" value="UniProtKB-SubCell"/>
</dbReference>
<dbReference type="GO" id="GO:0005524">
    <property type="term" value="F:ATP binding"/>
    <property type="evidence" value="ECO:0007669"/>
    <property type="project" value="UniProtKB-KW"/>
</dbReference>
<dbReference type="GO" id="GO:0033862">
    <property type="term" value="F:UMP kinase activity"/>
    <property type="evidence" value="ECO:0007669"/>
    <property type="project" value="UniProtKB-EC"/>
</dbReference>
<dbReference type="GO" id="GO:0044210">
    <property type="term" value="P:'de novo' CTP biosynthetic process"/>
    <property type="evidence" value="ECO:0007669"/>
    <property type="project" value="UniProtKB-UniRule"/>
</dbReference>
<dbReference type="GO" id="GO:0006225">
    <property type="term" value="P:UDP biosynthetic process"/>
    <property type="evidence" value="ECO:0007669"/>
    <property type="project" value="TreeGrafter"/>
</dbReference>
<dbReference type="CDD" id="cd04254">
    <property type="entry name" value="AAK_UMPK-PyrH-Ec"/>
    <property type="match status" value="1"/>
</dbReference>
<dbReference type="FunFam" id="3.40.1160.10:FF:000001">
    <property type="entry name" value="Uridylate kinase"/>
    <property type="match status" value="1"/>
</dbReference>
<dbReference type="Gene3D" id="3.40.1160.10">
    <property type="entry name" value="Acetylglutamate kinase-like"/>
    <property type="match status" value="1"/>
</dbReference>
<dbReference type="HAMAP" id="MF_01220_B">
    <property type="entry name" value="PyrH_B"/>
    <property type="match status" value="1"/>
</dbReference>
<dbReference type="InterPro" id="IPR036393">
    <property type="entry name" value="AceGlu_kinase-like_sf"/>
</dbReference>
<dbReference type="InterPro" id="IPR001048">
    <property type="entry name" value="Asp/Glu/Uridylate_kinase"/>
</dbReference>
<dbReference type="InterPro" id="IPR011817">
    <property type="entry name" value="Uridylate_kinase"/>
</dbReference>
<dbReference type="InterPro" id="IPR015963">
    <property type="entry name" value="Uridylate_kinase_bac"/>
</dbReference>
<dbReference type="NCBIfam" id="TIGR02075">
    <property type="entry name" value="pyrH_bact"/>
    <property type="match status" value="1"/>
</dbReference>
<dbReference type="PANTHER" id="PTHR42833">
    <property type="entry name" value="URIDYLATE KINASE"/>
    <property type="match status" value="1"/>
</dbReference>
<dbReference type="PANTHER" id="PTHR42833:SF4">
    <property type="entry name" value="URIDYLATE KINASE PUMPKIN, CHLOROPLASTIC"/>
    <property type="match status" value="1"/>
</dbReference>
<dbReference type="Pfam" id="PF00696">
    <property type="entry name" value="AA_kinase"/>
    <property type="match status" value="1"/>
</dbReference>
<dbReference type="PIRSF" id="PIRSF005650">
    <property type="entry name" value="Uridylate_kin"/>
    <property type="match status" value="1"/>
</dbReference>
<dbReference type="SUPFAM" id="SSF53633">
    <property type="entry name" value="Carbamate kinase-like"/>
    <property type="match status" value="1"/>
</dbReference>
<sequence length="240" mass="26102">MAQTSKYKRVVLKLSGEALAGDKGFGINPIIIKSVAQQVAEVAKMDCEIAVIVGGGNIWRGKTGSDLGMDRGTADYMGMLATVMNALALQDSLEQLDCDTRVLTSIEMKQVAEPYIRRRAIRHLEKKRVVIFAAGIGNPYFSTDTTAALRAAEVEADVILMGKNNVDGVYSADPKVDANAIKYEHLTHIQMLQEGLQVMDSTASSFCMDNNIPLNVFSIMEEGNIKRAVMGEKIGTLITK</sequence>
<organism>
    <name type="scientific">Staphylococcus epidermidis (strain ATCC 35984 / DSM 28319 / BCRC 17069 / CCUG 31568 / BM 3577 / RP62A)</name>
    <dbReference type="NCBI Taxonomy" id="176279"/>
    <lineage>
        <taxon>Bacteria</taxon>
        <taxon>Bacillati</taxon>
        <taxon>Bacillota</taxon>
        <taxon>Bacilli</taxon>
        <taxon>Bacillales</taxon>
        <taxon>Staphylococcaceae</taxon>
        <taxon>Staphylococcus</taxon>
    </lineage>
</organism>
<evidence type="ECO:0000255" key="1">
    <source>
        <dbReference type="HAMAP-Rule" id="MF_01220"/>
    </source>
</evidence>
<gene>
    <name evidence="1" type="primary">pyrH</name>
    <name type="ordered locus">SERP0825</name>
</gene>
<keyword id="KW-0021">Allosteric enzyme</keyword>
<keyword id="KW-0067">ATP-binding</keyword>
<keyword id="KW-0963">Cytoplasm</keyword>
<keyword id="KW-0418">Kinase</keyword>
<keyword id="KW-0547">Nucleotide-binding</keyword>
<keyword id="KW-0665">Pyrimidine biosynthesis</keyword>
<keyword id="KW-1185">Reference proteome</keyword>
<keyword id="KW-0808">Transferase</keyword>